<feature type="chain" id="PRO_0000221386" description="RIMS-binding protein 2">
    <location>
        <begin position="1"/>
        <end position="1325"/>
    </location>
</feature>
<feature type="domain" description="SH3 1" evidence="1">
    <location>
        <begin position="186"/>
        <end position="253"/>
    </location>
</feature>
<feature type="domain" description="Fibronectin type-III 1" evidence="2">
    <location>
        <begin position="315"/>
        <end position="408"/>
    </location>
</feature>
<feature type="domain" description="Fibronectin type-III 2" evidence="2">
    <location>
        <begin position="411"/>
        <end position="493"/>
    </location>
</feature>
<feature type="domain" description="Fibronectin type-III 3" evidence="2">
    <location>
        <begin position="507"/>
        <end position="608"/>
    </location>
</feature>
<feature type="domain" description="SH3 2" evidence="1">
    <location>
        <begin position="1121"/>
        <end position="1189"/>
    </location>
</feature>
<feature type="domain" description="SH3 3" evidence="1">
    <location>
        <begin position="1225"/>
        <end position="1292"/>
    </location>
</feature>
<feature type="region of interest" description="Disordered" evidence="3">
    <location>
        <begin position="153"/>
        <end position="181"/>
    </location>
</feature>
<feature type="region of interest" description="Disordered" evidence="3">
    <location>
        <begin position="601"/>
        <end position="778"/>
    </location>
</feature>
<feature type="region of interest" description="Disordered" evidence="3">
    <location>
        <begin position="988"/>
        <end position="1010"/>
    </location>
</feature>
<feature type="region of interest" description="Disordered" evidence="3">
    <location>
        <begin position="1040"/>
        <end position="1090"/>
    </location>
</feature>
<feature type="compositionally biased region" description="Basic and acidic residues" evidence="3">
    <location>
        <begin position="158"/>
        <end position="169"/>
    </location>
</feature>
<feature type="compositionally biased region" description="Basic and acidic residues" evidence="3">
    <location>
        <begin position="627"/>
        <end position="641"/>
    </location>
</feature>
<feature type="compositionally biased region" description="Polar residues" evidence="3">
    <location>
        <begin position="664"/>
        <end position="676"/>
    </location>
</feature>
<feature type="compositionally biased region" description="Basic and acidic residues" evidence="3">
    <location>
        <begin position="696"/>
        <end position="716"/>
    </location>
</feature>
<feature type="compositionally biased region" description="Polar residues" evidence="3">
    <location>
        <begin position="717"/>
        <end position="727"/>
    </location>
</feature>
<feature type="compositionally biased region" description="Basic and acidic residues" evidence="3">
    <location>
        <begin position="763"/>
        <end position="774"/>
    </location>
</feature>
<feature type="compositionally biased region" description="Basic and acidic residues" evidence="3">
    <location>
        <begin position="996"/>
        <end position="1010"/>
    </location>
</feature>
<dbReference type="EMBL" id="AY072908">
    <property type="protein sequence ID" value="AAL67995.1"/>
    <property type="molecule type" value="mRNA"/>
</dbReference>
<dbReference type="RefSeq" id="NP_989586.1">
    <property type="nucleotide sequence ID" value="NM_204255.1"/>
</dbReference>
<dbReference type="SMR" id="Q8QFX1"/>
<dbReference type="FunCoup" id="Q8QFX1">
    <property type="interactions" value="30"/>
</dbReference>
<dbReference type="STRING" id="9031.ENSGALP00000074065"/>
<dbReference type="PaxDb" id="9031-ENSGALP00000004056"/>
<dbReference type="GeneID" id="374105"/>
<dbReference type="KEGG" id="gga:374105"/>
<dbReference type="CTD" id="23504"/>
<dbReference type="VEuPathDB" id="HostDB:geneid_374105"/>
<dbReference type="eggNOG" id="KOG3632">
    <property type="taxonomic scope" value="Eukaryota"/>
</dbReference>
<dbReference type="InParanoid" id="Q8QFX1"/>
<dbReference type="OrthoDB" id="9112350at2759"/>
<dbReference type="PhylomeDB" id="Q8QFX1"/>
<dbReference type="PRO" id="PR:Q8QFX1"/>
<dbReference type="Proteomes" id="UP000000539">
    <property type="component" value="Unassembled WGS sequence"/>
</dbReference>
<dbReference type="GO" id="GO:0005886">
    <property type="term" value="C:plasma membrane"/>
    <property type="evidence" value="ECO:0007669"/>
    <property type="project" value="UniProtKB-SubCell"/>
</dbReference>
<dbReference type="GO" id="GO:0045202">
    <property type="term" value="C:synapse"/>
    <property type="evidence" value="ECO:0007669"/>
    <property type="project" value="UniProtKB-SubCell"/>
</dbReference>
<dbReference type="GO" id="GO:0007274">
    <property type="term" value="P:neuromuscular synaptic transmission"/>
    <property type="evidence" value="ECO:0000318"/>
    <property type="project" value="GO_Central"/>
</dbReference>
<dbReference type="CDD" id="cd00063">
    <property type="entry name" value="FN3"/>
    <property type="match status" value="3"/>
</dbReference>
<dbReference type="CDD" id="cd12014">
    <property type="entry name" value="SH3_RIM-BP_1"/>
    <property type="match status" value="1"/>
</dbReference>
<dbReference type="CDD" id="cd12012">
    <property type="entry name" value="SH3_RIM-BP_2"/>
    <property type="match status" value="1"/>
</dbReference>
<dbReference type="CDD" id="cd12013">
    <property type="entry name" value="SH3_RIM-BP_3"/>
    <property type="match status" value="1"/>
</dbReference>
<dbReference type="FunFam" id="2.30.30.40:FF:000023">
    <property type="entry name" value="RIMS-binding protein 2 isoform F"/>
    <property type="match status" value="1"/>
</dbReference>
<dbReference type="FunFam" id="2.30.30.40:FF:000006">
    <property type="entry name" value="RIMS-binding protein 2 isoform X1"/>
    <property type="match status" value="1"/>
</dbReference>
<dbReference type="FunFam" id="2.60.40.10:FF:000072">
    <property type="entry name" value="RIMS-binding protein 2 isoform X1"/>
    <property type="match status" value="1"/>
</dbReference>
<dbReference type="FunFam" id="2.60.40.10:FF:000643">
    <property type="entry name" value="RIMS-binding protein 2 isoform X1"/>
    <property type="match status" value="1"/>
</dbReference>
<dbReference type="FunFam" id="2.30.30.40:FF:000016">
    <property type="entry name" value="RIMS-binding protein 2 isoform X2"/>
    <property type="match status" value="1"/>
</dbReference>
<dbReference type="Gene3D" id="2.60.40.10">
    <property type="entry name" value="Immunoglobulins"/>
    <property type="match status" value="2"/>
</dbReference>
<dbReference type="Gene3D" id="2.30.30.40">
    <property type="entry name" value="SH3 Domains"/>
    <property type="match status" value="3"/>
</dbReference>
<dbReference type="InterPro" id="IPR003961">
    <property type="entry name" value="FN3_dom"/>
</dbReference>
<dbReference type="InterPro" id="IPR036116">
    <property type="entry name" value="FN3_sf"/>
</dbReference>
<dbReference type="InterPro" id="IPR013783">
    <property type="entry name" value="Ig-like_fold"/>
</dbReference>
<dbReference type="InterPro" id="IPR035753">
    <property type="entry name" value="RIM-BP_SH3_2"/>
</dbReference>
<dbReference type="InterPro" id="IPR035755">
    <property type="entry name" value="RIM-BP_SH3_3"/>
</dbReference>
<dbReference type="InterPro" id="IPR040325">
    <property type="entry name" value="RIMBP1/2/3"/>
</dbReference>
<dbReference type="InterPro" id="IPR036028">
    <property type="entry name" value="SH3-like_dom_sf"/>
</dbReference>
<dbReference type="InterPro" id="IPR001452">
    <property type="entry name" value="SH3_domain"/>
</dbReference>
<dbReference type="PANTHER" id="PTHR14234">
    <property type="entry name" value="RIM BINDING PROTEIN-RELATED"/>
    <property type="match status" value="1"/>
</dbReference>
<dbReference type="PANTHER" id="PTHR14234:SF18">
    <property type="entry name" value="RIMS-BINDING PROTEIN 2"/>
    <property type="match status" value="1"/>
</dbReference>
<dbReference type="Pfam" id="PF00041">
    <property type="entry name" value="fn3"/>
    <property type="match status" value="1"/>
</dbReference>
<dbReference type="Pfam" id="PF07653">
    <property type="entry name" value="SH3_2"/>
    <property type="match status" value="2"/>
</dbReference>
<dbReference type="Pfam" id="PF14604">
    <property type="entry name" value="SH3_9"/>
    <property type="match status" value="1"/>
</dbReference>
<dbReference type="PRINTS" id="PR00452">
    <property type="entry name" value="SH3DOMAIN"/>
</dbReference>
<dbReference type="SMART" id="SM00060">
    <property type="entry name" value="FN3"/>
    <property type="match status" value="3"/>
</dbReference>
<dbReference type="SMART" id="SM00326">
    <property type="entry name" value="SH3"/>
    <property type="match status" value="3"/>
</dbReference>
<dbReference type="SUPFAM" id="SSF49265">
    <property type="entry name" value="Fibronectin type III"/>
    <property type="match status" value="2"/>
</dbReference>
<dbReference type="SUPFAM" id="SSF50044">
    <property type="entry name" value="SH3-domain"/>
    <property type="match status" value="3"/>
</dbReference>
<dbReference type="PROSITE" id="PS50853">
    <property type="entry name" value="FN3"/>
    <property type="match status" value="3"/>
</dbReference>
<dbReference type="PROSITE" id="PS50002">
    <property type="entry name" value="SH3"/>
    <property type="match status" value="3"/>
</dbReference>
<protein>
    <recommendedName>
        <fullName>RIMS-binding protein 2</fullName>
        <shortName>RIM-BP2</shortName>
    </recommendedName>
</protein>
<gene>
    <name type="primary">RIMBP2</name>
    <name type="synonym">RBP2</name>
</gene>
<comment type="function">
    <text evidence="4">Plays a role in the synaptic transmission as bifunctional linker that interacts simultaneously with RIMS1, RIMS2, CACNA1D and CACNA1B.</text>
</comment>
<comment type="subunit">
    <text evidence="4">Interacts with RIMS1, RIMS2, CACNA1D and CACNA1B, and potentially with other Ca(2+) channel alpha-1 isoforms.</text>
</comment>
<comment type="subcellular location">
    <subcellularLocation>
        <location evidence="4">Cell membrane</location>
    </subcellularLocation>
    <subcellularLocation>
        <location evidence="4">Synapse</location>
    </subcellularLocation>
    <text>Synaptic plasma membrane.</text>
</comment>
<comment type="tissue specificity">
    <text evidence="4">Brain, cochlea and retina.</text>
</comment>
<comment type="domain">
    <text>The SH3 domains mediate binding to a proline-rich motif in RIMS1, RIMS2, CACNA1D and CACNA1B.</text>
</comment>
<comment type="similarity">
    <text evidence="5">Belongs to the RIMBP family.</text>
</comment>
<keyword id="KW-1003">Cell membrane</keyword>
<keyword id="KW-0472">Membrane</keyword>
<keyword id="KW-1185">Reference proteome</keyword>
<keyword id="KW-0677">Repeat</keyword>
<keyword id="KW-0728">SH3 domain</keyword>
<keyword id="KW-0770">Synapse</keyword>
<proteinExistence type="evidence at protein level"/>
<sequence length="1325" mass="147538">MREAAERRQQLELEHEQALAVLNAKQQEIELLQKAQVEAKKEHEGAVQLLEAKVRELEEKCRTQSEQFNLLSRELEKFRQQAGKIDLLSSNPLTSSDISGSPSKSLSQLMNGIATSLGKGHESPSGSRCVISEFIRPLQISGDKPEQLSVKPTFLSKSRSDTPRCRFDSDMDNDQNSNTSKQRYSGKVHLCIARYSYNPFDGPNENPEAELPLTAGKYLYVYGDMDEDGFYEGELLDGQRGLVPSNFVDFVQDNETRLSSTLSSEQDQNFINHSGSTLEGDILEISPPSHIDSSVISNGAGTLDVNIDEIGEDIVPYPRKITLIKQLAKSVIVGWEPPVVPPGWGTINSYNVLVDKEVRMNIALGSRTKALIEKLNISTCTYRISIQSITNKGNSDELQCTLLVGKDVVVAPSNLKVDNITQISAELSWLPTNSNYSHVIFLNEEEFDIVKAASYKYHFFNLKPNMAYKVKVMAKPHQMPWQLPLEQREKKEAFVEFSTLPAGPPAPPQDVTVRAGSTQATIQVSWKPPALTATGTSHGANVTGYGVYAKGQRVAEVIFPTAENTLVELMRLRNLEAKEVTVRTLSAQGESVDSSVAAIPSDLLVPPSPHPRTAPKSKPLASAGAPETKEEHLGPHLKIDESWEQTHSASPVHGHTLEPPVPNFPSSLQGRRSPSPNRILPQPQGTPVPNTVAKAMAREAAQRVAESNRMERRSVFSERSNAAQYANSDDEEDGYDSPNVKRRGASVDDFLKGSELGKQPHYCHGEDYHTESSRGSDLSDIMEEDEEELYSEMQLEDGGRRRVSLTSHNALKECNKNKTTDATFLEQPDFSQQIHHSKKLFSIPEVAEEDGEYSELLYKQGLGMPYKKKSTIARDSRPPRPYNQDQQHNFWYPAKHRISGMEDFTADDKGCKYSRSLSRSPDSGLDCGSEEEESRFTFRYTCDSVSANVASSCCADTADCSCRKSMRPLLARRKTLTRQTSIEEDFGDLGSSFVEPRSEQVKSSYEKKYETQKCNRTDNLSNEDIQGGWKNDLKMADSRAAGPLAKSSHRDAEDSLLLGNPSSAGRPERVEHAGRRSSHGSAVPQRSRPMLVPSIDGYGGHDHLSPDIYEESETDPGTEDISTRIFVALFDYDPLTMSPNPDAAEEELPFKEGQIIKVYGDKDADGFYRGETCTRIGLIPCNMVSEIQADDEEMMDQLLKQGFLPLNTPVEKIERNRRSGRQHSVSTRRMVALYDYDPRESSPNVDVEAELTFCTGDIITVFGEIDEDGFYYGELNGQKGLVPSNFLEEVPDDVEVYLSDAPSRYLHDTPMRTKAKRKKSVHFTP</sequence>
<evidence type="ECO:0000255" key="1">
    <source>
        <dbReference type="PROSITE-ProRule" id="PRU00192"/>
    </source>
</evidence>
<evidence type="ECO:0000255" key="2">
    <source>
        <dbReference type="PROSITE-ProRule" id="PRU00316"/>
    </source>
</evidence>
<evidence type="ECO:0000256" key="3">
    <source>
        <dbReference type="SAM" id="MobiDB-lite"/>
    </source>
</evidence>
<evidence type="ECO:0000269" key="4">
    <source>
    </source>
</evidence>
<evidence type="ECO:0000305" key="5"/>
<accession>Q8QFX1</accession>
<reference key="1">
    <citation type="journal article" date="2002" name="Neuron">
        <title>RIM binding proteins (RBPs) couple Rab3-interacting molecules (RIMs) to voltage-gated Ca(2+) channels.</title>
        <authorList>
            <person name="Hibino H."/>
            <person name="Pironkova R."/>
            <person name="Onwumere O."/>
            <person name="Vologodskaia M."/>
            <person name="Hudspeth A.J."/>
            <person name="Lesage F."/>
        </authorList>
    </citation>
    <scope>NUCLEOTIDE SEQUENCE [MRNA]</scope>
    <scope>FUNCTION</scope>
    <scope>SUBCELLULAR LOCATION</scope>
    <scope>TISSUE SPECIFICITY</scope>
    <scope>INTERACTION WITH RIMS1; RIMS2; CACNA1D AND CACNA1B</scope>
    <scope>FUNCTION OF SH3 DOMAIN</scope>
</reference>
<name>RIMB2_CHICK</name>
<organism>
    <name type="scientific">Gallus gallus</name>
    <name type="common">Chicken</name>
    <dbReference type="NCBI Taxonomy" id="9031"/>
    <lineage>
        <taxon>Eukaryota</taxon>
        <taxon>Metazoa</taxon>
        <taxon>Chordata</taxon>
        <taxon>Craniata</taxon>
        <taxon>Vertebrata</taxon>
        <taxon>Euteleostomi</taxon>
        <taxon>Archelosauria</taxon>
        <taxon>Archosauria</taxon>
        <taxon>Dinosauria</taxon>
        <taxon>Saurischia</taxon>
        <taxon>Theropoda</taxon>
        <taxon>Coelurosauria</taxon>
        <taxon>Aves</taxon>
        <taxon>Neognathae</taxon>
        <taxon>Galloanserae</taxon>
        <taxon>Galliformes</taxon>
        <taxon>Phasianidae</taxon>
        <taxon>Phasianinae</taxon>
        <taxon>Gallus</taxon>
    </lineage>
</organism>